<name>XPT_STRPD</name>
<proteinExistence type="inferred from homology"/>
<reference key="1">
    <citation type="journal article" date="2006" name="Proc. Natl. Acad. Sci. U.S.A.">
        <title>Molecular genetic anatomy of inter- and intraserotype variation in the human bacterial pathogen group A Streptococcus.</title>
        <authorList>
            <person name="Beres S.B."/>
            <person name="Richter E.W."/>
            <person name="Nagiec M.J."/>
            <person name="Sumby P."/>
            <person name="Porcella S.F."/>
            <person name="DeLeo F.R."/>
            <person name="Musser J.M."/>
        </authorList>
    </citation>
    <scope>NUCLEOTIDE SEQUENCE [LARGE SCALE GENOMIC DNA]</scope>
    <source>
        <strain>MGAS10270</strain>
    </source>
</reference>
<sequence length="193" mass="20994">MQLLEERILTDGNILGENILKVDNFLTHQVDYRLMKAIGKVFAQKYAEAGITKVVTIEASGIAPAVYAAEAMDVPMIFAKKHKNITMTEGILTAEVYSFTKQVTSTVSIAGKFLSKEDKVLIIDDFLANGQAAKGLIEIIGQAGAQVVGVGIVIEKSFQDGRRLIEDMGIEVTSLARIKNFENGNLNFLEADA</sequence>
<accession>Q1JGV7</accession>
<comment type="function">
    <text evidence="1">Converts the preformed base xanthine, a product of nucleic acid breakdown, to xanthosine 5'-monophosphate (XMP), so it can be reused for RNA or DNA synthesis.</text>
</comment>
<comment type="catalytic activity">
    <reaction evidence="1">
        <text>XMP + diphosphate = xanthine + 5-phospho-alpha-D-ribose 1-diphosphate</text>
        <dbReference type="Rhea" id="RHEA:10800"/>
        <dbReference type="ChEBI" id="CHEBI:17712"/>
        <dbReference type="ChEBI" id="CHEBI:33019"/>
        <dbReference type="ChEBI" id="CHEBI:57464"/>
        <dbReference type="ChEBI" id="CHEBI:58017"/>
        <dbReference type="EC" id="2.4.2.22"/>
    </reaction>
</comment>
<comment type="pathway">
    <text evidence="1">Purine metabolism; XMP biosynthesis via salvage pathway; XMP from xanthine: step 1/1.</text>
</comment>
<comment type="subunit">
    <text evidence="1">Homodimer.</text>
</comment>
<comment type="subcellular location">
    <subcellularLocation>
        <location evidence="1">Cytoplasm</location>
    </subcellularLocation>
</comment>
<comment type="similarity">
    <text evidence="1">Belongs to the purine/pyrimidine phosphoribosyltransferase family. Xpt subfamily.</text>
</comment>
<feature type="chain" id="PRO_0000339770" description="Xanthine phosphoribosyltransferase">
    <location>
        <begin position="1"/>
        <end position="193"/>
    </location>
</feature>
<feature type="binding site" evidence="1">
    <location>
        <position position="20"/>
    </location>
    <ligand>
        <name>xanthine</name>
        <dbReference type="ChEBI" id="CHEBI:17712"/>
    </ligand>
</feature>
<feature type="binding site" evidence="1">
    <location>
        <position position="27"/>
    </location>
    <ligand>
        <name>xanthine</name>
        <dbReference type="ChEBI" id="CHEBI:17712"/>
    </ligand>
</feature>
<feature type="binding site" evidence="1">
    <location>
        <begin position="128"/>
        <end position="132"/>
    </location>
    <ligand>
        <name>5-phospho-alpha-D-ribose 1-diphosphate</name>
        <dbReference type="ChEBI" id="CHEBI:58017"/>
    </ligand>
</feature>
<feature type="binding site" evidence="1">
    <location>
        <position position="156"/>
    </location>
    <ligand>
        <name>xanthine</name>
        <dbReference type="ChEBI" id="CHEBI:17712"/>
    </ligand>
</feature>
<keyword id="KW-0963">Cytoplasm</keyword>
<keyword id="KW-0328">Glycosyltransferase</keyword>
<keyword id="KW-0660">Purine salvage</keyword>
<keyword id="KW-0808">Transferase</keyword>
<evidence type="ECO:0000255" key="1">
    <source>
        <dbReference type="HAMAP-Rule" id="MF_01184"/>
    </source>
</evidence>
<organism>
    <name type="scientific">Streptococcus pyogenes serotype M2 (strain MGAS10270)</name>
    <dbReference type="NCBI Taxonomy" id="370552"/>
    <lineage>
        <taxon>Bacteria</taxon>
        <taxon>Bacillati</taxon>
        <taxon>Bacillota</taxon>
        <taxon>Bacilli</taxon>
        <taxon>Lactobacillales</taxon>
        <taxon>Streptococcaceae</taxon>
        <taxon>Streptococcus</taxon>
    </lineage>
</organism>
<dbReference type="EC" id="2.4.2.22" evidence="1"/>
<dbReference type="EMBL" id="CP000260">
    <property type="protein sequence ID" value="ABF34037.1"/>
    <property type="molecule type" value="Genomic_DNA"/>
</dbReference>
<dbReference type="RefSeq" id="WP_002984677.1">
    <property type="nucleotide sequence ID" value="NZ_CVUH01000005.1"/>
</dbReference>
<dbReference type="SMR" id="Q1JGV7"/>
<dbReference type="KEGG" id="sph:MGAS10270_Spy0972"/>
<dbReference type="HOGENOM" id="CLU_099015_0_0_9"/>
<dbReference type="UniPathway" id="UPA00602">
    <property type="reaction ID" value="UER00658"/>
</dbReference>
<dbReference type="Proteomes" id="UP000002436">
    <property type="component" value="Chromosome"/>
</dbReference>
<dbReference type="GO" id="GO:0005737">
    <property type="term" value="C:cytoplasm"/>
    <property type="evidence" value="ECO:0007669"/>
    <property type="project" value="UniProtKB-SubCell"/>
</dbReference>
<dbReference type="GO" id="GO:0000310">
    <property type="term" value="F:xanthine phosphoribosyltransferase activity"/>
    <property type="evidence" value="ECO:0007669"/>
    <property type="project" value="UniProtKB-UniRule"/>
</dbReference>
<dbReference type="GO" id="GO:0006166">
    <property type="term" value="P:purine ribonucleoside salvage"/>
    <property type="evidence" value="ECO:0007669"/>
    <property type="project" value="UniProtKB-KW"/>
</dbReference>
<dbReference type="GO" id="GO:0046110">
    <property type="term" value="P:xanthine metabolic process"/>
    <property type="evidence" value="ECO:0007669"/>
    <property type="project" value="InterPro"/>
</dbReference>
<dbReference type="GO" id="GO:0032265">
    <property type="term" value="P:XMP salvage"/>
    <property type="evidence" value="ECO:0007669"/>
    <property type="project" value="UniProtKB-UniRule"/>
</dbReference>
<dbReference type="CDD" id="cd06223">
    <property type="entry name" value="PRTases_typeI"/>
    <property type="match status" value="1"/>
</dbReference>
<dbReference type="Gene3D" id="3.40.50.2020">
    <property type="match status" value="1"/>
</dbReference>
<dbReference type="HAMAP" id="MF_01184">
    <property type="entry name" value="XPRTase"/>
    <property type="match status" value="1"/>
</dbReference>
<dbReference type="InterPro" id="IPR000836">
    <property type="entry name" value="PRibTrfase_dom"/>
</dbReference>
<dbReference type="InterPro" id="IPR029057">
    <property type="entry name" value="PRTase-like"/>
</dbReference>
<dbReference type="InterPro" id="IPR050118">
    <property type="entry name" value="Pur/Pyrimidine_PRTase"/>
</dbReference>
<dbReference type="InterPro" id="IPR010079">
    <property type="entry name" value="Xanthine_PRibTrfase"/>
</dbReference>
<dbReference type="NCBIfam" id="NF006671">
    <property type="entry name" value="PRK09219.1"/>
    <property type="match status" value="1"/>
</dbReference>
<dbReference type="NCBIfam" id="TIGR01744">
    <property type="entry name" value="XPRTase"/>
    <property type="match status" value="1"/>
</dbReference>
<dbReference type="PANTHER" id="PTHR43864">
    <property type="entry name" value="HYPOXANTHINE/GUANINE PHOSPHORIBOSYLTRANSFERASE"/>
    <property type="match status" value="1"/>
</dbReference>
<dbReference type="PANTHER" id="PTHR43864:SF1">
    <property type="entry name" value="XANTHINE PHOSPHORIBOSYLTRANSFERASE"/>
    <property type="match status" value="1"/>
</dbReference>
<dbReference type="Pfam" id="PF00156">
    <property type="entry name" value="Pribosyltran"/>
    <property type="match status" value="1"/>
</dbReference>
<dbReference type="SUPFAM" id="SSF53271">
    <property type="entry name" value="PRTase-like"/>
    <property type="match status" value="1"/>
</dbReference>
<protein>
    <recommendedName>
        <fullName evidence="1">Xanthine phosphoribosyltransferase</fullName>
        <shortName evidence="1">XPRTase</shortName>
        <ecNumber evidence="1">2.4.2.22</ecNumber>
    </recommendedName>
</protein>
<gene>
    <name evidence="1" type="primary">xpt</name>
    <name type="ordered locus">MGAS10270_Spy0972</name>
</gene>